<evidence type="ECO:0000250" key="1"/>
<evidence type="ECO:0000305" key="2"/>
<proteinExistence type="inferred from homology"/>
<sequence>MTNKVIQRNIHISHRKASLVIDLVRNKPVHEAIRILSNTPKKFAPIVLKLLNSAISNVQHNSKDMDPSKLYIYKIVANQGPTMKRTLPRAKGSADQLFKRTTHLEIVLSDDVNEREKELAAIKAKKSKKPLAVEPIAKVETKKVAKPSKVEIKPVEKDENVDPELLKREQQVLKVVEKTASQKEEETTETIMISTSPKNAQVLFDDLEKNVIFYKTTPINKVLRVLVYVTSPTKKVVGEFDLESVEIGAISSIWRKYSKQSVISKKEYDAYYEGKDKAHALVSKKAYKYRNPKDLSEYNMTKGPSGFQYLK</sequence>
<comment type="function">
    <text evidence="1">This protein binds specifically to 23S rRNA; its binding is stimulated by other ribosomal proteins, e.g. L4, L17, and L20. It is important during the early stages of 50S assembly. It makes multiple contacts with different domains of the 23S rRNA in the assembled 50S subunit and ribosome (By similarity).</text>
</comment>
<comment type="function">
    <text evidence="1">The globular domain of the protein is located near the polypeptide exit tunnel on the outside of the subunit, while an extended beta-hairpin is found that lines the wall of the exit tunnel in the center of the 70S ribosome.</text>
</comment>
<comment type="subunit">
    <text evidence="1">Part of the 50S ribosomal subunit.</text>
</comment>
<comment type="similarity">
    <text evidence="2">Belongs to the universal ribosomal protein uL22 family.</text>
</comment>
<dbReference type="EMBL" id="CP000942">
    <property type="protein sequence ID" value="ACA33068.1"/>
    <property type="molecule type" value="Genomic_DNA"/>
</dbReference>
<dbReference type="RefSeq" id="WP_006688968.1">
    <property type="nucleotide sequence ID" value="NC_010503.1"/>
</dbReference>
<dbReference type="SMR" id="B1AIM5"/>
<dbReference type="GeneID" id="29672595"/>
<dbReference type="KEGG" id="upa:UPA3_0244"/>
<dbReference type="HOGENOM" id="CLU_894135_0_0_14"/>
<dbReference type="Proteomes" id="UP000002162">
    <property type="component" value="Chromosome"/>
</dbReference>
<dbReference type="GO" id="GO:0022625">
    <property type="term" value="C:cytosolic large ribosomal subunit"/>
    <property type="evidence" value="ECO:0007669"/>
    <property type="project" value="TreeGrafter"/>
</dbReference>
<dbReference type="GO" id="GO:0019843">
    <property type="term" value="F:rRNA binding"/>
    <property type="evidence" value="ECO:0007669"/>
    <property type="project" value="UniProtKB-UniRule"/>
</dbReference>
<dbReference type="GO" id="GO:0003735">
    <property type="term" value="F:structural constituent of ribosome"/>
    <property type="evidence" value="ECO:0007669"/>
    <property type="project" value="InterPro"/>
</dbReference>
<dbReference type="GO" id="GO:0006412">
    <property type="term" value="P:translation"/>
    <property type="evidence" value="ECO:0007669"/>
    <property type="project" value="UniProtKB-UniRule"/>
</dbReference>
<dbReference type="CDD" id="cd00336">
    <property type="entry name" value="Ribosomal_L22"/>
    <property type="match status" value="1"/>
</dbReference>
<dbReference type="Gene3D" id="2.30.130.30">
    <property type="entry name" value="Hypothetical protein"/>
    <property type="match status" value="1"/>
</dbReference>
<dbReference type="Gene3D" id="3.90.470.10">
    <property type="entry name" value="Ribosomal protein L22/L17"/>
    <property type="match status" value="1"/>
</dbReference>
<dbReference type="HAMAP" id="MF_01331_B">
    <property type="entry name" value="Ribosomal_uL22_B"/>
    <property type="match status" value="1"/>
</dbReference>
<dbReference type="InterPro" id="IPR001063">
    <property type="entry name" value="Ribosomal_uL22"/>
</dbReference>
<dbReference type="InterPro" id="IPR005727">
    <property type="entry name" value="Ribosomal_uL22_bac/chlpt-type"/>
</dbReference>
<dbReference type="InterPro" id="IPR047867">
    <property type="entry name" value="Ribosomal_uL22_bac/org-type"/>
</dbReference>
<dbReference type="InterPro" id="IPR018260">
    <property type="entry name" value="Ribosomal_uL22_CS"/>
</dbReference>
<dbReference type="InterPro" id="IPR036394">
    <property type="entry name" value="Ribosomal_uL22_sf"/>
</dbReference>
<dbReference type="NCBIfam" id="NF008917">
    <property type="entry name" value="PRK12279.1"/>
    <property type="match status" value="1"/>
</dbReference>
<dbReference type="NCBIfam" id="TIGR01044">
    <property type="entry name" value="rplV_bact"/>
    <property type="match status" value="1"/>
</dbReference>
<dbReference type="PANTHER" id="PTHR13501">
    <property type="entry name" value="CHLOROPLAST 50S RIBOSOMAL PROTEIN L22-RELATED"/>
    <property type="match status" value="1"/>
</dbReference>
<dbReference type="PANTHER" id="PTHR13501:SF8">
    <property type="entry name" value="LARGE RIBOSOMAL SUBUNIT PROTEIN UL22M"/>
    <property type="match status" value="1"/>
</dbReference>
<dbReference type="Pfam" id="PF00237">
    <property type="entry name" value="Ribosomal_L22"/>
    <property type="match status" value="1"/>
</dbReference>
<dbReference type="SUPFAM" id="SSF54843">
    <property type="entry name" value="Ribosomal protein L22"/>
    <property type="match status" value="1"/>
</dbReference>
<dbReference type="PROSITE" id="PS00464">
    <property type="entry name" value="RIBOSOMAL_L22"/>
    <property type="match status" value="1"/>
</dbReference>
<organism>
    <name type="scientific">Ureaplasma parvum serovar 3 (strain ATCC 27815 / 27 / NCTC 11736)</name>
    <dbReference type="NCBI Taxonomy" id="505682"/>
    <lineage>
        <taxon>Bacteria</taxon>
        <taxon>Bacillati</taxon>
        <taxon>Mycoplasmatota</taxon>
        <taxon>Mycoplasmoidales</taxon>
        <taxon>Mycoplasmoidaceae</taxon>
        <taxon>Ureaplasma</taxon>
    </lineage>
</organism>
<reference key="1">
    <citation type="submission" date="2008-02" db="EMBL/GenBank/DDBJ databases">
        <title>Genome sequence of Ureaplasma parvum serovar 3.</title>
        <authorList>
            <person name="Methe B.A."/>
            <person name="Glass J."/>
            <person name="Waites K."/>
            <person name="Shrivastava S."/>
        </authorList>
    </citation>
    <scope>NUCLEOTIDE SEQUENCE [LARGE SCALE GENOMIC DNA]</scope>
    <source>
        <strain>ATCC 27815 / 27 / NCTC 11736</strain>
    </source>
</reference>
<feature type="chain" id="PRO_0000354537" description="Large ribosomal subunit protein uL22">
    <location>
        <begin position="1"/>
        <end position="311"/>
    </location>
</feature>
<name>RL22_UREP2</name>
<gene>
    <name type="primary">rplV</name>
    <name type="ordered locus">UPA3_0244</name>
</gene>
<protein>
    <recommendedName>
        <fullName evidence="2">Large ribosomal subunit protein uL22</fullName>
    </recommendedName>
    <alternativeName>
        <fullName>50S ribosomal protein L22</fullName>
    </alternativeName>
</protein>
<accession>B1AIM5</accession>
<keyword id="KW-0687">Ribonucleoprotein</keyword>
<keyword id="KW-0689">Ribosomal protein</keyword>
<keyword id="KW-0694">RNA-binding</keyword>
<keyword id="KW-0699">rRNA-binding</keyword>